<feature type="chain" id="PRO_0000267065" description="Enolase">
    <location>
        <begin position="1"/>
        <end position="426"/>
    </location>
</feature>
<feature type="active site" description="Proton donor" evidence="1">
    <location>
        <position position="205"/>
    </location>
</feature>
<feature type="active site" description="Proton acceptor" evidence="1">
    <location>
        <position position="337"/>
    </location>
</feature>
<feature type="binding site" evidence="1">
    <location>
        <position position="163"/>
    </location>
    <ligand>
        <name>(2R)-2-phosphoglycerate</name>
        <dbReference type="ChEBI" id="CHEBI:58289"/>
    </ligand>
</feature>
<feature type="binding site" evidence="1">
    <location>
        <position position="242"/>
    </location>
    <ligand>
        <name>Mg(2+)</name>
        <dbReference type="ChEBI" id="CHEBI:18420"/>
    </ligand>
</feature>
<feature type="binding site" evidence="1">
    <location>
        <position position="285"/>
    </location>
    <ligand>
        <name>Mg(2+)</name>
        <dbReference type="ChEBI" id="CHEBI:18420"/>
    </ligand>
</feature>
<feature type="binding site" evidence="1">
    <location>
        <position position="312"/>
    </location>
    <ligand>
        <name>Mg(2+)</name>
        <dbReference type="ChEBI" id="CHEBI:18420"/>
    </ligand>
</feature>
<feature type="binding site" evidence="1">
    <location>
        <position position="337"/>
    </location>
    <ligand>
        <name>(2R)-2-phosphoglycerate</name>
        <dbReference type="ChEBI" id="CHEBI:58289"/>
    </ligand>
</feature>
<feature type="binding site" evidence="1">
    <location>
        <position position="366"/>
    </location>
    <ligand>
        <name>(2R)-2-phosphoglycerate</name>
        <dbReference type="ChEBI" id="CHEBI:58289"/>
    </ligand>
</feature>
<feature type="binding site" evidence="1">
    <location>
        <position position="367"/>
    </location>
    <ligand>
        <name>(2R)-2-phosphoglycerate</name>
        <dbReference type="ChEBI" id="CHEBI:58289"/>
    </ligand>
</feature>
<feature type="binding site" evidence="1">
    <location>
        <position position="388"/>
    </location>
    <ligand>
        <name>(2R)-2-phosphoglycerate</name>
        <dbReference type="ChEBI" id="CHEBI:58289"/>
    </ligand>
</feature>
<evidence type="ECO:0000255" key="1">
    <source>
        <dbReference type="HAMAP-Rule" id="MF_00318"/>
    </source>
</evidence>
<sequence length="426" mass="45488">MSKIIDITGREILDSRGNPTVEADVVLEGGVRGRAAVPSGASTGTREAVELRDEDSSRYGGQGVLKAVGHINGDIRQRLVGQEAEAQESIDQAMLDLDGTSSKRRLGANAILAVSLAVARAAALAAEKPLYRYLSADERFQMPVPMMNIINGGAHADNNVDLQEFMIVPVGAGSIAEAVRYGAEVFHALKKVLRGRGLGTGVGDEGGFAPDLSSNVAAIEAILEAITQAGFEPGRDISLALDTASSEFYQDGRYVLASEGKTLDKEEFTGVLASWVEQYPILSVEDGMAEDDWEGWALLTQRLGQRVQLVGDDLFVTNTAILKEGINRGIANSILIKVNQIGTLTETLAAIRMAHEAGYTAVISHRSGETEDTTIADLAVATQSGQIKTGSLSRTDRVAKYNQLLRIEAELGDKAHYPGRQAFTHP</sequence>
<comment type="function">
    <text evidence="1">Catalyzes the reversible conversion of 2-phosphoglycerate (2-PG) into phosphoenolpyruvate (PEP). It is essential for the degradation of carbohydrates via glycolysis.</text>
</comment>
<comment type="catalytic activity">
    <reaction evidence="1">
        <text>(2R)-2-phosphoglycerate = phosphoenolpyruvate + H2O</text>
        <dbReference type="Rhea" id="RHEA:10164"/>
        <dbReference type="ChEBI" id="CHEBI:15377"/>
        <dbReference type="ChEBI" id="CHEBI:58289"/>
        <dbReference type="ChEBI" id="CHEBI:58702"/>
        <dbReference type="EC" id="4.2.1.11"/>
    </reaction>
</comment>
<comment type="cofactor">
    <cofactor evidence="1">
        <name>Mg(2+)</name>
        <dbReference type="ChEBI" id="CHEBI:18420"/>
    </cofactor>
    <text evidence="1">Binds a second Mg(2+) ion via substrate during catalysis.</text>
</comment>
<comment type="pathway">
    <text evidence="1">Carbohydrate degradation; glycolysis; pyruvate from D-glyceraldehyde 3-phosphate: step 4/5.</text>
</comment>
<comment type="subunit">
    <text evidence="1">Component of the RNA degradosome, a multiprotein complex involved in RNA processing and mRNA degradation.</text>
</comment>
<comment type="subcellular location">
    <subcellularLocation>
        <location evidence="1">Cytoplasm</location>
    </subcellularLocation>
    <subcellularLocation>
        <location evidence="1">Secreted</location>
    </subcellularLocation>
    <subcellularLocation>
        <location evidence="1">Cell surface</location>
    </subcellularLocation>
    <text evidence="1">Fractions of enolase are present in both the cytoplasm and on the cell surface.</text>
</comment>
<comment type="similarity">
    <text evidence="1">Belongs to the enolase family.</text>
</comment>
<reference key="1">
    <citation type="journal article" date="2006" name="Appl. Environ. Microbiol.">
        <title>Complete genome sequence of the marine, chemolithoautotrophic, ammonia-oxidizing bacterium Nitrosococcus oceani ATCC 19707.</title>
        <authorList>
            <person name="Klotz M.G."/>
            <person name="Arp D.J."/>
            <person name="Chain P.S.G."/>
            <person name="El-Sheikh A.F."/>
            <person name="Hauser L.J."/>
            <person name="Hommes N.G."/>
            <person name="Larimer F.W."/>
            <person name="Malfatti S.A."/>
            <person name="Norton J.M."/>
            <person name="Poret-Peterson A.T."/>
            <person name="Vergez L.M."/>
            <person name="Ward B.B."/>
        </authorList>
    </citation>
    <scope>NUCLEOTIDE SEQUENCE [LARGE SCALE GENOMIC DNA]</scope>
    <source>
        <strain>ATCC 19707 / BCRC 17464 / JCM 30415 / NCIMB 11848 / C-107</strain>
    </source>
</reference>
<name>ENO_NITOC</name>
<accession>Q3JCT1</accession>
<keyword id="KW-0963">Cytoplasm</keyword>
<keyword id="KW-0324">Glycolysis</keyword>
<keyword id="KW-0456">Lyase</keyword>
<keyword id="KW-0460">Magnesium</keyword>
<keyword id="KW-0479">Metal-binding</keyword>
<keyword id="KW-1185">Reference proteome</keyword>
<keyword id="KW-0964">Secreted</keyword>
<protein>
    <recommendedName>
        <fullName evidence="1">Enolase</fullName>
        <ecNumber evidence="1">4.2.1.11</ecNumber>
    </recommendedName>
    <alternativeName>
        <fullName evidence="1">2-phospho-D-glycerate hydro-lyase</fullName>
    </alternativeName>
    <alternativeName>
        <fullName evidence="1">2-phosphoglycerate dehydratase</fullName>
    </alternativeName>
</protein>
<dbReference type="EC" id="4.2.1.11" evidence="1"/>
<dbReference type="EMBL" id="CP000127">
    <property type="protein sequence ID" value="ABA57365.1"/>
    <property type="molecule type" value="Genomic_DNA"/>
</dbReference>
<dbReference type="RefSeq" id="WP_011330495.1">
    <property type="nucleotide sequence ID" value="NC_007484.1"/>
</dbReference>
<dbReference type="SMR" id="Q3JCT1"/>
<dbReference type="FunCoup" id="Q3JCT1">
    <property type="interactions" value="505"/>
</dbReference>
<dbReference type="STRING" id="323261.Noc_0852"/>
<dbReference type="KEGG" id="noc:Noc_0852"/>
<dbReference type="eggNOG" id="COG0148">
    <property type="taxonomic scope" value="Bacteria"/>
</dbReference>
<dbReference type="HOGENOM" id="CLU_031223_2_1_6"/>
<dbReference type="InParanoid" id="Q3JCT1"/>
<dbReference type="UniPathway" id="UPA00109">
    <property type="reaction ID" value="UER00187"/>
</dbReference>
<dbReference type="Proteomes" id="UP000006838">
    <property type="component" value="Chromosome"/>
</dbReference>
<dbReference type="GO" id="GO:0009986">
    <property type="term" value="C:cell surface"/>
    <property type="evidence" value="ECO:0007669"/>
    <property type="project" value="UniProtKB-SubCell"/>
</dbReference>
<dbReference type="GO" id="GO:0005576">
    <property type="term" value="C:extracellular region"/>
    <property type="evidence" value="ECO:0007669"/>
    <property type="project" value="UniProtKB-SubCell"/>
</dbReference>
<dbReference type="GO" id="GO:0000015">
    <property type="term" value="C:phosphopyruvate hydratase complex"/>
    <property type="evidence" value="ECO:0007669"/>
    <property type="project" value="InterPro"/>
</dbReference>
<dbReference type="GO" id="GO:0000287">
    <property type="term" value="F:magnesium ion binding"/>
    <property type="evidence" value="ECO:0007669"/>
    <property type="project" value="UniProtKB-UniRule"/>
</dbReference>
<dbReference type="GO" id="GO:0004634">
    <property type="term" value="F:phosphopyruvate hydratase activity"/>
    <property type="evidence" value="ECO:0007669"/>
    <property type="project" value="UniProtKB-UniRule"/>
</dbReference>
<dbReference type="GO" id="GO:0006096">
    <property type="term" value="P:glycolytic process"/>
    <property type="evidence" value="ECO:0007669"/>
    <property type="project" value="UniProtKB-UniRule"/>
</dbReference>
<dbReference type="CDD" id="cd03313">
    <property type="entry name" value="enolase"/>
    <property type="match status" value="1"/>
</dbReference>
<dbReference type="FunFam" id="3.20.20.120:FF:000001">
    <property type="entry name" value="Enolase"/>
    <property type="match status" value="1"/>
</dbReference>
<dbReference type="FunFam" id="3.30.390.10:FF:000001">
    <property type="entry name" value="Enolase"/>
    <property type="match status" value="1"/>
</dbReference>
<dbReference type="Gene3D" id="3.20.20.120">
    <property type="entry name" value="Enolase-like C-terminal domain"/>
    <property type="match status" value="1"/>
</dbReference>
<dbReference type="Gene3D" id="3.30.390.10">
    <property type="entry name" value="Enolase-like, N-terminal domain"/>
    <property type="match status" value="1"/>
</dbReference>
<dbReference type="HAMAP" id="MF_00318">
    <property type="entry name" value="Enolase"/>
    <property type="match status" value="1"/>
</dbReference>
<dbReference type="InterPro" id="IPR000941">
    <property type="entry name" value="Enolase"/>
</dbReference>
<dbReference type="InterPro" id="IPR036849">
    <property type="entry name" value="Enolase-like_C_sf"/>
</dbReference>
<dbReference type="InterPro" id="IPR029017">
    <property type="entry name" value="Enolase-like_N"/>
</dbReference>
<dbReference type="InterPro" id="IPR020810">
    <property type="entry name" value="Enolase_C"/>
</dbReference>
<dbReference type="InterPro" id="IPR020809">
    <property type="entry name" value="Enolase_CS"/>
</dbReference>
<dbReference type="InterPro" id="IPR020811">
    <property type="entry name" value="Enolase_N"/>
</dbReference>
<dbReference type="NCBIfam" id="TIGR01060">
    <property type="entry name" value="eno"/>
    <property type="match status" value="1"/>
</dbReference>
<dbReference type="PANTHER" id="PTHR11902">
    <property type="entry name" value="ENOLASE"/>
    <property type="match status" value="1"/>
</dbReference>
<dbReference type="PANTHER" id="PTHR11902:SF1">
    <property type="entry name" value="ENOLASE"/>
    <property type="match status" value="1"/>
</dbReference>
<dbReference type="Pfam" id="PF00113">
    <property type="entry name" value="Enolase_C"/>
    <property type="match status" value="1"/>
</dbReference>
<dbReference type="Pfam" id="PF03952">
    <property type="entry name" value="Enolase_N"/>
    <property type="match status" value="1"/>
</dbReference>
<dbReference type="PIRSF" id="PIRSF001400">
    <property type="entry name" value="Enolase"/>
    <property type="match status" value="1"/>
</dbReference>
<dbReference type="PRINTS" id="PR00148">
    <property type="entry name" value="ENOLASE"/>
</dbReference>
<dbReference type="SFLD" id="SFLDF00002">
    <property type="entry name" value="enolase"/>
    <property type="match status" value="1"/>
</dbReference>
<dbReference type="SFLD" id="SFLDG00178">
    <property type="entry name" value="enolase"/>
    <property type="match status" value="1"/>
</dbReference>
<dbReference type="SMART" id="SM01192">
    <property type="entry name" value="Enolase_C"/>
    <property type="match status" value="1"/>
</dbReference>
<dbReference type="SMART" id="SM01193">
    <property type="entry name" value="Enolase_N"/>
    <property type="match status" value="1"/>
</dbReference>
<dbReference type="SUPFAM" id="SSF51604">
    <property type="entry name" value="Enolase C-terminal domain-like"/>
    <property type="match status" value="1"/>
</dbReference>
<dbReference type="SUPFAM" id="SSF54826">
    <property type="entry name" value="Enolase N-terminal domain-like"/>
    <property type="match status" value="1"/>
</dbReference>
<dbReference type="PROSITE" id="PS00164">
    <property type="entry name" value="ENOLASE"/>
    <property type="match status" value="1"/>
</dbReference>
<proteinExistence type="inferred from homology"/>
<organism>
    <name type="scientific">Nitrosococcus oceani (strain ATCC 19707 / BCRC 17464 / JCM 30415 / NCIMB 11848 / C-107)</name>
    <dbReference type="NCBI Taxonomy" id="323261"/>
    <lineage>
        <taxon>Bacteria</taxon>
        <taxon>Pseudomonadati</taxon>
        <taxon>Pseudomonadota</taxon>
        <taxon>Gammaproteobacteria</taxon>
        <taxon>Chromatiales</taxon>
        <taxon>Chromatiaceae</taxon>
        <taxon>Nitrosococcus</taxon>
    </lineage>
</organism>
<gene>
    <name evidence="1" type="primary">eno</name>
    <name type="ordered locus">Noc_0852</name>
</gene>